<proteinExistence type="inferred from homology"/>
<sequence length="216" mass="24285">MALSEAAVKVQAALQERGLETPMLPNVFTPEERKDKIEFHMKEILTLMSLDLSDDSLADTPRRIAKMYVDEIFSGLDYENFPKITVIDNKMGFDEMVRVQDISLTSTCEHHLVTIDGTATIAYIPRKKIIGLSKINRIVRFFSQRPQVQERLTQQVLVALQTLLETKDVAVKMDAVHYCVKSRGVMDSTSSTTTTALGGIFKSNPATRAEFLNQSK</sequence>
<feature type="chain" id="PRO_1000043734" description="GTP cyclohydrolase 1">
    <location>
        <begin position="1"/>
        <end position="216"/>
    </location>
</feature>
<feature type="binding site" evidence="2">
    <location>
        <position position="108"/>
    </location>
    <ligand>
        <name>Zn(2+)</name>
        <dbReference type="ChEBI" id="CHEBI:29105"/>
    </ligand>
</feature>
<feature type="binding site" evidence="2">
    <location>
        <position position="111"/>
    </location>
    <ligand>
        <name>Zn(2+)</name>
        <dbReference type="ChEBI" id="CHEBI:29105"/>
    </ligand>
</feature>
<feature type="binding site" evidence="2">
    <location>
        <position position="179"/>
    </location>
    <ligand>
        <name>Zn(2+)</name>
        <dbReference type="ChEBI" id="CHEBI:29105"/>
    </ligand>
</feature>
<evidence type="ECO:0000250" key="1"/>
<evidence type="ECO:0000255" key="2">
    <source>
        <dbReference type="HAMAP-Rule" id="MF_00223"/>
    </source>
</evidence>
<comment type="catalytic activity">
    <reaction evidence="2">
        <text>GTP + H2O = 7,8-dihydroneopterin 3'-triphosphate + formate + H(+)</text>
        <dbReference type="Rhea" id="RHEA:17473"/>
        <dbReference type="ChEBI" id="CHEBI:15377"/>
        <dbReference type="ChEBI" id="CHEBI:15378"/>
        <dbReference type="ChEBI" id="CHEBI:15740"/>
        <dbReference type="ChEBI" id="CHEBI:37565"/>
        <dbReference type="ChEBI" id="CHEBI:58462"/>
        <dbReference type="EC" id="3.5.4.16"/>
    </reaction>
</comment>
<comment type="pathway">
    <text evidence="2">Cofactor biosynthesis; 7,8-dihydroneopterin triphosphate biosynthesis; 7,8-dihydroneopterin triphosphate from GTP: step 1/1.</text>
</comment>
<comment type="subunit">
    <text evidence="1">Toroid-shaped homodecamer, composed of two pentamers of five dimers.</text>
</comment>
<comment type="similarity">
    <text evidence="2">Belongs to the GTP cyclohydrolase I family.</text>
</comment>
<reference key="1">
    <citation type="submission" date="2006-09" db="EMBL/GenBank/DDBJ databases">
        <title>Complete sequence of chromosome 1 of Shewanella sp. ANA-3.</title>
        <authorList>
            <person name="Copeland A."/>
            <person name="Lucas S."/>
            <person name="Lapidus A."/>
            <person name="Barry K."/>
            <person name="Detter J.C."/>
            <person name="Glavina del Rio T."/>
            <person name="Hammon N."/>
            <person name="Israni S."/>
            <person name="Dalin E."/>
            <person name="Tice H."/>
            <person name="Pitluck S."/>
            <person name="Chertkov O."/>
            <person name="Brettin T."/>
            <person name="Bruce D."/>
            <person name="Han C."/>
            <person name="Tapia R."/>
            <person name="Gilna P."/>
            <person name="Schmutz J."/>
            <person name="Larimer F."/>
            <person name="Land M."/>
            <person name="Hauser L."/>
            <person name="Kyrpides N."/>
            <person name="Kim E."/>
            <person name="Newman D."/>
            <person name="Salticov C."/>
            <person name="Konstantinidis K."/>
            <person name="Klappenback J."/>
            <person name="Tiedje J."/>
            <person name="Richardson P."/>
        </authorList>
    </citation>
    <scope>NUCLEOTIDE SEQUENCE [LARGE SCALE GENOMIC DNA]</scope>
    <source>
        <strain>ANA-3</strain>
    </source>
</reference>
<name>GCH1_SHESA</name>
<accession>A0L1S4</accession>
<protein>
    <recommendedName>
        <fullName evidence="2">GTP cyclohydrolase 1</fullName>
        <ecNumber evidence="2">3.5.4.16</ecNumber>
    </recommendedName>
    <alternativeName>
        <fullName evidence="2">GTP cyclohydrolase I</fullName>
        <shortName evidence="2">GTP-CH-I</shortName>
    </alternativeName>
</protein>
<gene>
    <name evidence="2" type="primary">folE</name>
    <name type="ordered locus">Shewana3_3775</name>
</gene>
<keyword id="KW-0342">GTP-binding</keyword>
<keyword id="KW-0378">Hydrolase</keyword>
<keyword id="KW-0479">Metal-binding</keyword>
<keyword id="KW-0547">Nucleotide-binding</keyword>
<keyword id="KW-0554">One-carbon metabolism</keyword>
<keyword id="KW-0862">Zinc</keyword>
<dbReference type="EC" id="3.5.4.16" evidence="2"/>
<dbReference type="EMBL" id="CP000469">
    <property type="protein sequence ID" value="ABK49993.1"/>
    <property type="molecule type" value="Genomic_DNA"/>
</dbReference>
<dbReference type="RefSeq" id="WP_011624327.1">
    <property type="nucleotide sequence ID" value="NC_008577.1"/>
</dbReference>
<dbReference type="SMR" id="A0L1S4"/>
<dbReference type="STRING" id="94122.Shewana3_3775"/>
<dbReference type="GeneID" id="94729706"/>
<dbReference type="KEGG" id="shn:Shewana3_3775"/>
<dbReference type="eggNOG" id="COG0302">
    <property type="taxonomic scope" value="Bacteria"/>
</dbReference>
<dbReference type="HOGENOM" id="CLU_049768_3_2_6"/>
<dbReference type="OrthoDB" id="9801207at2"/>
<dbReference type="UniPathway" id="UPA00848">
    <property type="reaction ID" value="UER00151"/>
</dbReference>
<dbReference type="Proteomes" id="UP000002589">
    <property type="component" value="Chromosome"/>
</dbReference>
<dbReference type="GO" id="GO:0005737">
    <property type="term" value="C:cytoplasm"/>
    <property type="evidence" value="ECO:0007669"/>
    <property type="project" value="TreeGrafter"/>
</dbReference>
<dbReference type="GO" id="GO:0005525">
    <property type="term" value="F:GTP binding"/>
    <property type="evidence" value="ECO:0007669"/>
    <property type="project" value="UniProtKB-KW"/>
</dbReference>
<dbReference type="GO" id="GO:0003934">
    <property type="term" value="F:GTP cyclohydrolase I activity"/>
    <property type="evidence" value="ECO:0007669"/>
    <property type="project" value="UniProtKB-UniRule"/>
</dbReference>
<dbReference type="GO" id="GO:0008270">
    <property type="term" value="F:zinc ion binding"/>
    <property type="evidence" value="ECO:0007669"/>
    <property type="project" value="UniProtKB-UniRule"/>
</dbReference>
<dbReference type="GO" id="GO:0006730">
    <property type="term" value="P:one-carbon metabolic process"/>
    <property type="evidence" value="ECO:0007669"/>
    <property type="project" value="UniProtKB-UniRule"/>
</dbReference>
<dbReference type="GO" id="GO:0006729">
    <property type="term" value="P:tetrahydrobiopterin biosynthetic process"/>
    <property type="evidence" value="ECO:0007669"/>
    <property type="project" value="TreeGrafter"/>
</dbReference>
<dbReference type="GO" id="GO:0046654">
    <property type="term" value="P:tetrahydrofolate biosynthetic process"/>
    <property type="evidence" value="ECO:0007669"/>
    <property type="project" value="UniProtKB-UniRule"/>
</dbReference>
<dbReference type="FunFam" id="3.30.1130.10:FF:000001">
    <property type="entry name" value="GTP cyclohydrolase 1"/>
    <property type="match status" value="1"/>
</dbReference>
<dbReference type="Gene3D" id="1.10.286.10">
    <property type="match status" value="1"/>
</dbReference>
<dbReference type="Gene3D" id="3.30.1130.10">
    <property type="match status" value="1"/>
</dbReference>
<dbReference type="HAMAP" id="MF_00223">
    <property type="entry name" value="FolE"/>
    <property type="match status" value="1"/>
</dbReference>
<dbReference type="InterPro" id="IPR043133">
    <property type="entry name" value="GTP-CH-I_C/QueF"/>
</dbReference>
<dbReference type="InterPro" id="IPR043134">
    <property type="entry name" value="GTP-CH-I_N"/>
</dbReference>
<dbReference type="InterPro" id="IPR001474">
    <property type="entry name" value="GTP_CycHdrlase_I"/>
</dbReference>
<dbReference type="InterPro" id="IPR018234">
    <property type="entry name" value="GTP_CycHdrlase_I_CS"/>
</dbReference>
<dbReference type="InterPro" id="IPR020602">
    <property type="entry name" value="GTP_CycHdrlase_I_dom"/>
</dbReference>
<dbReference type="NCBIfam" id="TIGR00063">
    <property type="entry name" value="folE"/>
    <property type="match status" value="1"/>
</dbReference>
<dbReference type="NCBIfam" id="NF006824">
    <property type="entry name" value="PRK09347.1-1"/>
    <property type="match status" value="1"/>
</dbReference>
<dbReference type="NCBIfam" id="NF006826">
    <property type="entry name" value="PRK09347.1-3"/>
    <property type="match status" value="1"/>
</dbReference>
<dbReference type="PANTHER" id="PTHR11109:SF7">
    <property type="entry name" value="GTP CYCLOHYDROLASE 1"/>
    <property type="match status" value="1"/>
</dbReference>
<dbReference type="PANTHER" id="PTHR11109">
    <property type="entry name" value="GTP CYCLOHYDROLASE I"/>
    <property type="match status" value="1"/>
</dbReference>
<dbReference type="Pfam" id="PF01227">
    <property type="entry name" value="GTP_cyclohydroI"/>
    <property type="match status" value="1"/>
</dbReference>
<dbReference type="SUPFAM" id="SSF55620">
    <property type="entry name" value="Tetrahydrobiopterin biosynthesis enzymes-like"/>
    <property type="match status" value="1"/>
</dbReference>
<dbReference type="PROSITE" id="PS00859">
    <property type="entry name" value="GTP_CYCLOHYDROL_1_1"/>
    <property type="match status" value="1"/>
</dbReference>
<dbReference type="PROSITE" id="PS00860">
    <property type="entry name" value="GTP_CYCLOHYDROL_1_2"/>
    <property type="match status" value="1"/>
</dbReference>
<organism>
    <name type="scientific">Shewanella sp. (strain ANA-3)</name>
    <dbReference type="NCBI Taxonomy" id="94122"/>
    <lineage>
        <taxon>Bacteria</taxon>
        <taxon>Pseudomonadati</taxon>
        <taxon>Pseudomonadota</taxon>
        <taxon>Gammaproteobacteria</taxon>
        <taxon>Alteromonadales</taxon>
        <taxon>Shewanellaceae</taxon>
        <taxon>Shewanella</taxon>
    </lineage>
</organism>